<name>TOIPB_XENLA</name>
<proteinExistence type="evidence at transcript level"/>
<accession>Q6INE3</accession>
<comment type="function">
    <text>Component of the signaling pathway of IL-1 and Toll-like receptors. Inhibits cell activation by microbial products. Connects the ubiquitin pathway to autophagy by functioning as a ubiquitin-ATG8 family adapter and thus mediating autophagic clearance of ubiquitin conjugates. The TOLLIP-dependent selective autophagy pathway plays an important role in clearance.</text>
</comment>
<comment type="subunit">
    <text evidence="1">Interacts with ATG8 family proteins (via AIM motifs), and ubiquitin (via CUE domain). of cytotoxic polyQ proteins aggregates.</text>
</comment>
<comment type="subcellular location">
    <subcellularLocation>
        <location evidence="4">Cytoplasm</location>
    </subcellularLocation>
</comment>
<comment type="domain">
    <text evidence="1">Both ATG8-interaction motifs (AIM1 and AIM2) are required for the association with ATG8 family proteins.</text>
</comment>
<comment type="similarity">
    <text evidence="4">Belongs to the tollip family.</text>
</comment>
<reference key="1">
    <citation type="submission" date="2004-06" db="EMBL/GenBank/DDBJ databases">
        <authorList>
            <consortium name="NIH - Xenopus Gene Collection (XGC) project"/>
        </authorList>
    </citation>
    <scope>NUCLEOTIDE SEQUENCE [LARGE SCALE MRNA]</scope>
    <source>
        <tissue>Embryo</tissue>
    </source>
</reference>
<organism>
    <name type="scientific">Xenopus laevis</name>
    <name type="common">African clawed frog</name>
    <dbReference type="NCBI Taxonomy" id="8355"/>
    <lineage>
        <taxon>Eukaryota</taxon>
        <taxon>Metazoa</taxon>
        <taxon>Chordata</taxon>
        <taxon>Craniata</taxon>
        <taxon>Vertebrata</taxon>
        <taxon>Euteleostomi</taxon>
        <taxon>Amphibia</taxon>
        <taxon>Batrachia</taxon>
        <taxon>Anura</taxon>
        <taxon>Pipoidea</taxon>
        <taxon>Pipidae</taxon>
        <taxon>Xenopodinae</taxon>
        <taxon>Xenopus</taxon>
        <taxon>Xenopus</taxon>
    </lineage>
</organism>
<sequence length="269" mass="29983">MATSISTQRGQVFIGELPQDFLRISPTQQQQQIQLDAQAAQQLQYSGVMATMGRLSITVVQAKLAKNYGMTRMDPYCRIRLGYAVYETPTAHNGAKNPRWNKVIQCTIPPGVDSFYIEIFDERAFSMDDRIAWTHITIPETLKEGKHVDEWFSLSGKQGDDKEGMINLVMSYTSVPAMMPAQPVVLMPTVYQQGVGYVPIADPIYNPGMPMAAPPPAVNPQHETREEDIQSIKDMFPTMDPEVIRSVLEAQGGNRDAAVNSLLQMVEDS</sequence>
<protein>
    <recommendedName>
        <fullName>Toll-interacting protein B</fullName>
    </recommendedName>
</protein>
<keyword id="KW-0072">Autophagy</keyword>
<keyword id="KW-0963">Cytoplasm</keyword>
<keyword id="KW-0391">Immunity</keyword>
<keyword id="KW-0395">Inflammatory response</keyword>
<keyword id="KW-0399">Innate immunity</keyword>
<keyword id="KW-1185">Reference proteome</keyword>
<keyword id="KW-0677">Repeat</keyword>
<gene>
    <name type="primary">tollip-b</name>
</gene>
<dbReference type="EMBL" id="BC072340">
    <property type="protein sequence ID" value="AAH72340.1"/>
    <property type="molecule type" value="mRNA"/>
</dbReference>
<dbReference type="RefSeq" id="NP_001085420.1">
    <property type="nucleotide sequence ID" value="NM_001091951.1"/>
</dbReference>
<dbReference type="SMR" id="Q6INE3"/>
<dbReference type="DNASU" id="443846"/>
<dbReference type="GeneID" id="443846"/>
<dbReference type="KEGG" id="xla:443846"/>
<dbReference type="AGR" id="Xenbase:XB-GENE-946212"/>
<dbReference type="CTD" id="443846"/>
<dbReference type="Xenbase" id="XB-GENE-946212">
    <property type="gene designation" value="tollip.L"/>
</dbReference>
<dbReference type="OMA" id="CIVQAQL"/>
<dbReference type="OrthoDB" id="9942608at2759"/>
<dbReference type="Proteomes" id="UP000186698">
    <property type="component" value="Chromosome 4L"/>
</dbReference>
<dbReference type="Bgee" id="443846">
    <property type="expression patterns" value="Expressed in blastula and 19 other cell types or tissues"/>
</dbReference>
<dbReference type="GO" id="GO:0005737">
    <property type="term" value="C:cytoplasm"/>
    <property type="evidence" value="ECO:0000318"/>
    <property type="project" value="GO_Central"/>
</dbReference>
<dbReference type="GO" id="GO:0043130">
    <property type="term" value="F:ubiquitin binding"/>
    <property type="evidence" value="ECO:0000318"/>
    <property type="project" value="GO_Central"/>
</dbReference>
<dbReference type="GO" id="GO:0031624">
    <property type="term" value="F:ubiquitin conjugating enzyme binding"/>
    <property type="evidence" value="ECO:0000318"/>
    <property type="project" value="GO_Central"/>
</dbReference>
<dbReference type="GO" id="GO:0006914">
    <property type="term" value="P:autophagy"/>
    <property type="evidence" value="ECO:0007669"/>
    <property type="project" value="UniProtKB-KW"/>
</dbReference>
<dbReference type="GO" id="GO:0006954">
    <property type="term" value="P:inflammatory response"/>
    <property type="evidence" value="ECO:0007669"/>
    <property type="project" value="UniProtKB-KW"/>
</dbReference>
<dbReference type="GO" id="GO:0045087">
    <property type="term" value="P:innate immune response"/>
    <property type="evidence" value="ECO:0007669"/>
    <property type="project" value="UniProtKB-KW"/>
</dbReference>
<dbReference type="GO" id="GO:0016310">
    <property type="term" value="P:phosphorylation"/>
    <property type="evidence" value="ECO:0000250"/>
    <property type="project" value="UniProtKB"/>
</dbReference>
<dbReference type="GO" id="GO:0006511">
    <property type="term" value="P:ubiquitin-dependent protein catabolic process"/>
    <property type="evidence" value="ECO:0000318"/>
    <property type="project" value="GO_Central"/>
</dbReference>
<dbReference type="CDD" id="cd04016">
    <property type="entry name" value="C2_Tollip"/>
    <property type="match status" value="1"/>
</dbReference>
<dbReference type="CDD" id="cd14363">
    <property type="entry name" value="CUE_TOLIP"/>
    <property type="match status" value="1"/>
</dbReference>
<dbReference type="FunFam" id="1.10.8.10:FF:000036">
    <property type="entry name" value="Toll-interacting protein-like Protein"/>
    <property type="match status" value="1"/>
</dbReference>
<dbReference type="FunFam" id="2.60.40.150:FF:000055">
    <property type="entry name" value="Toll-interacting protein-like Protein"/>
    <property type="match status" value="1"/>
</dbReference>
<dbReference type="Gene3D" id="2.60.40.150">
    <property type="entry name" value="C2 domain"/>
    <property type="match status" value="1"/>
</dbReference>
<dbReference type="Gene3D" id="1.10.8.10">
    <property type="entry name" value="DNA helicase RuvA subunit, C-terminal domain"/>
    <property type="match status" value="1"/>
</dbReference>
<dbReference type="InterPro" id="IPR000008">
    <property type="entry name" value="C2_dom"/>
</dbReference>
<dbReference type="InterPro" id="IPR035892">
    <property type="entry name" value="C2_domain_sf"/>
</dbReference>
<dbReference type="InterPro" id="IPR003892">
    <property type="entry name" value="CUE"/>
</dbReference>
<dbReference type="InterPro" id="IPR041799">
    <property type="entry name" value="TOLIP_CUE"/>
</dbReference>
<dbReference type="InterPro" id="IPR037301">
    <property type="entry name" value="Tollip_C2"/>
</dbReference>
<dbReference type="InterPro" id="IPR009060">
    <property type="entry name" value="UBA-like_sf"/>
</dbReference>
<dbReference type="PANTHER" id="PTHR16461">
    <property type="entry name" value="TOLL-INTERACTING PROTEIN"/>
    <property type="match status" value="1"/>
</dbReference>
<dbReference type="PANTHER" id="PTHR16461:SF5">
    <property type="entry name" value="TOLL-INTERACTING PROTEIN"/>
    <property type="match status" value="1"/>
</dbReference>
<dbReference type="Pfam" id="PF00168">
    <property type="entry name" value="C2"/>
    <property type="match status" value="1"/>
</dbReference>
<dbReference type="Pfam" id="PF02845">
    <property type="entry name" value="CUE"/>
    <property type="match status" value="1"/>
</dbReference>
<dbReference type="SMART" id="SM00239">
    <property type="entry name" value="C2"/>
    <property type="match status" value="1"/>
</dbReference>
<dbReference type="SMART" id="SM00546">
    <property type="entry name" value="CUE"/>
    <property type="match status" value="1"/>
</dbReference>
<dbReference type="SUPFAM" id="SSF49562">
    <property type="entry name" value="C2 domain (Calcium/lipid-binding domain, CaLB)"/>
    <property type="match status" value="1"/>
</dbReference>
<dbReference type="SUPFAM" id="SSF46934">
    <property type="entry name" value="UBA-like"/>
    <property type="match status" value="1"/>
</dbReference>
<dbReference type="PROSITE" id="PS50004">
    <property type="entry name" value="C2"/>
    <property type="match status" value="1"/>
</dbReference>
<dbReference type="PROSITE" id="PS51140">
    <property type="entry name" value="CUE"/>
    <property type="match status" value="1"/>
</dbReference>
<feature type="chain" id="PRO_0000384939" description="Toll-interacting protein B">
    <location>
        <begin position="1"/>
        <end position="269"/>
    </location>
</feature>
<feature type="domain" description="C2" evidence="2">
    <location>
        <begin position="35"/>
        <end position="152"/>
    </location>
</feature>
<feature type="domain" description="CUE" evidence="3">
    <location>
        <begin position="224"/>
        <end position="267"/>
    </location>
</feature>
<feature type="short sequence motif" description="AIM1">
    <location>
        <begin position="133"/>
        <end position="136"/>
    </location>
</feature>
<feature type="short sequence motif" description="AIM2">
    <location>
        <begin position="151"/>
        <end position="154"/>
    </location>
</feature>
<evidence type="ECO:0000250" key="1"/>
<evidence type="ECO:0000255" key="2">
    <source>
        <dbReference type="PROSITE-ProRule" id="PRU00041"/>
    </source>
</evidence>
<evidence type="ECO:0000255" key="3">
    <source>
        <dbReference type="PROSITE-ProRule" id="PRU00468"/>
    </source>
</evidence>
<evidence type="ECO:0000305" key="4"/>